<proteinExistence type="inferred from homology"/>
<feature type="chain" id="PRO_1000139382" description="CTP synthase">
    <location>
        <begin position="1"/>
        <end position="535"/>
    </location>
</feature>
<feature type="domain" description="Glutamine amidotransferase type-1" evidence="1">
    <location>
        <begin position="292"/>
        <end position="534"/>
    </location>
</feature>
<feature type="region of interest" description="Amidoligase domain" evidence="1">
    <location>
        <begin position="1"/>
        <end position="267"/>
    </location>
</feature>
<feature type="active site" description="Nucleophile; for glutamine hydrolysis" evidence="1">
    <location>
        <position position="381"/>
    </location>
</feature>
<feature type="active site" evidence="1">
    <location>
        <position position="507"/>
    </location>
</feature>
<feature type="active site" evidence="1">
    <location>
        <position position="509"/>
    </location>
</feature>
<feature type="binding site" evidence="1">
    <location>
        <position position="13"/>
    </location>
    <ligand>
        <name>CTP</name>
        <dbReference type="ChEBI" id="CHEBI:37563"/>
        <note>allosteric inhibitor</note>
    </ligand>
</feature>
<feature type="binding site" evidence="1">
    <location>
        <position position="13"/>
    </location>
    <ligand>
        <name>UTP</name>
        <dbReference type="ChEBI" id="CHEBI:46398"/>
    </ligand>
</feature>
<feature type="binding site" evidence="1">
    <location>
        <begin position="14"/>
        <end position="19"/>
    </location>
    <ligand>
        <name>ATP</name>
        <dbReference type="ChEBI" id="CHEBI:30616"/>
    </ligand>
</feature>
<feature type="binding site" evidence="1">
    <location>
        <position position="54"/>
    </location>
    <ligand>
        <name>L-glutamine</name>
        <dbReference type="ChEBI" id="CHEBI:58359"/>
    </ligand>
</feature>
<feature type="binding site" evidence="1">
    <location>
        <position position="71"/>
    </location>
    <ligand>
        <name>ATP</name>
        <dbReference type="ChEBI" id="CHEBI:30616"/>
    </ligand>
</feature>
<feature type="binding site" evidence="1">
    <location>
        <position position="71"/>
    </location>
    <ligand>
        <name>Mg(2+)</name>
        <dbReference type="ChEBI" id="CHEBI:18420"/>
    </ligand>
</feature>
<feature type="binding site" evidence="1">
    <location>
        <position position="141"/>
    </location>
    <ligand>
        <name>Mg(2+)</name>
        <dbReference type="ChEBI" id="CHEBI:18420"/>
    </ligand>
</feature>
<feature type="binding site" evidence="1">
    <location>
        <begin position="148"/>
        <end position="150"/>
    </location>
    <ligand>
        <name>CTP</name>
        <dbReference type="ChEBI" id="CHEBI:37563"/>
        <note>allosteric inhibitor</note>
    </ligand>
</feature>
<feature type="binding site" evidence="1">
    <location>
        <begin position="188"/>
        <end position="193"/>
    </location>
    <ligand>
        <name>CTP</name>
        <dbReference type="ChEBI" id="CHEBI:37563"/>
        <note>allosteric inhibitor</note>
    </ligand>
</feature>
<feature type="binding site" evidence="1">
    <location>
        <begin position="188"/>
        <end position="193"/>
    </location>
    <ligand>
        <name>UTP</name>
        <dbReference type="ChEBI" id="CHEBI:46398"/>
    </ligand>
</feature>
<feature type="binding site" evidence="1">
    <location>
        <position position="224"/>
    </location>
    <ligand>
        <name>CTP</name>
        <dbReference type="ChEBI" id="CHEBI:37563"/>
        <note>allosteric inhibitor</note>
    </ligand>
</feature>
<feature type="binding site" evidence="1">
    <location>
        <position position="224"/>
    </location>
    <ligand>
        <name>UTP</name>
        <dbReference type="ChEBI" id="CHEBI:46398"/>
    </ligand>
</feature>
<feature type="binding site" evidence="1">
    <location>
        <begin position="240"/>
        <end position="242"/>
    </location>
    <ligand>
        <name>ATP</name>
        <dbReference type="ChEBI" id="CHEBI:30616"/>
    </ligand>
</feature>
<feature type="binding site" evidence="1">
    <location>
        <position position="354"/>
    </location>
    <ligand>
        <name>L-glutamine</name>
        <dbReference type="ChEBI" id="CHEBI:58359"/>
    </ligand>
</feature>
<feature type="binding site" evidence="1">
    <location>
        <begin position="382"/>
        <end position="385"/>
    </location>
    <ligand>
        <name>L-glutamine</name>
        <dbReference type="ChEBI" id="CHEBI:58359"/>
    </ligand>
</feature>
<feature type="binding site" evidence="1">
    <location>
        <position position="405"/>
    </location>
    <ligand>
        <name>L-glutamine</name>
        <dbReference type="ChEBI" id="CHEBI:58359"/>
    </ligand>
</feature>
<feature type="binding site" evidence="1">
    <location>
        <position position="462"/>
    </location>
    <ligand>
        <name>L-glutamine</name>
        <dbReference type="ChEBI" id="CHEBI:58359"/>
    </ligand>
</feature>
<keyword id="KW-0067">ATP-binding</keyword>
<keyword id="KW-0315">Glutamine amidotransferase</keyword>
<keyword id="KW-0436">Ligase</keyword>
<keyword id="KW-0460">Magnesium</keyword>
<keyword id="KW-0479">Metal-binding</keyword>
<keyword id="KW-0547">Nucleotide-binding</keyword>
<keyword id="KW-0665">Pyrimidine biosynthesis</keyword>
<comment type="function">
    <text evidence="1">Catalyzes the ATP-dependent amination of UTP to CTP with either L-glutamine or ammonia as the source of nitrogen. Regulates intracellular CTP levels through interactions with the four ribonucleotide triphosphates.</text>
</comment>
<comment type="catalytic activity">
    <reaction evidence="1">
        <text>UTP + L-glutamine + ATP + H2O = CTP + L-glutamate + ADP + phosphate + 2 H(+)</text>
        <dbReference type="Rhea" id="RHEA:26426"/>
        <dbReference type="ChEBI" id="CHEBI:15377"/>
        <dbReference type="ChEBI" id="CHEBI:15378"/>
        <dbReference type="ChEBI" id="CHEBI:29985"/>
        <dbReference type="ChEBI" id="CHEBI:30616"/>
        <dbReference type="ChEBI" id="CHEBI:37563"/>
        <dbReference type="ChEBI" id="CHEBI:43474"/>
        <dbReference type="ChEBI" id="CHEBI:46398"/>
        <dbReference type="ChEBI" id="CHEBI:58359"/>
        <dbReference type="ChEBI" id="CHEBI:456216"/>
        <dbReference type="EC" id="6.3.4.2"/>
    </reaction>
</comment>
<comment type="catalytic activity">
    <reaction evidence="1">
        <text>L-glutamine + H2O = L-glutamate + NH4(+)</text>
        <dbReference type="Rhea" id="RHEA:15889"/>
        <dbReference type="ChEBI" id="CHEBI:15377"/>
        <dbReference type="ChEBI" id="CHEBI:28938"/>
        <dbReference type="ChEBI" id="CHEBI:29985"/>
        <dbReference type="ChEBI" id="CHEBI:58359"/>
    </reaction>
</comment>
<comment type="catalytic activity">
    <reaction evidence="1">
        <text>UTP + NH4(+) + ATP = CTP + ADP + phosphate + 2 H(+)</text>
        <dbReference type="Rhea" id="RHEA:16597"/>
        <dbReference type="ChEBI" id="CHEBI:15378"/>
        <dbReference type="ChEBI" id="CHEBI:28938"/>
        <dbReference type="ChEBI" id="CHEBI:30616"/>
        <dbReference type="ChEBI" id="CHEBI:37563"/>
        <dbReference type="ChEBI" id="CHEBI:43474"/>
        <dbReference type="ChEBI" id="CHEBI:46398"/>
        <dbReference type="ChEBI" id="CHEBI:456216"/>
    </reaction>
</comment>
<comment type="activity regulation">
    <text evidence="1">Allosterically activated by GTP, when glutamine is the substrate; GTP has no effect on the reaction when ammonia is the substrate. The allosteric effector GTP functions by stabilizing the protein conformation that binds the tetrahedral intermediate(s) formed during glutamine hydrolysis. Inhibited by the product CTP, via allosteric rather than competitive inhibition.</text>
</comment>
<comment type="pathway">
    <text evidence="1">Pyrimidine metabolism; CTP biosynthesis via de novo pathway; CTP from UDP: step 2/2.</text>
</comment>
<comment type="subunit">
    <text evidence="1">Homotetramer.</text>
</comment>
<comment type="miscellaneous">
    <text evidence="1">CTPSs have evolved a hybrid strategy for distinguishing between UTP and CTP. The overlapping regions of the product feedback inhibitory and substrate sites recognize a common feature in both compounds, the triphosphate moiety. To differentiate isosteric substrate and product pyrimidine rings, an additional pocket far from the expected kinase/ligase catalytic site, specifically recognizes the cytosine and ribose portions of the product inhibitor.</text>
</comment>
<comment type="similarity">
    <text evidence="1">Belongs to the CTP synthase family.</text>
</comment>
<reference key="1">
    <citation type="submission" date="2008-10" db="EMBL/GenBank/DDBJ databases">
        <title>Genome sequence of Bacillus cereus AH187.</title>
        <authorList>
            <person name="Dodson R.J."/>
            <person name="Durkin A.S."/>
            <person name="Rosovitz M.J."/>
            <person name="Rasko D.A."/>
            <person name="Kolsto A.B."/>
            <person name="Okstad O.A."/>
            <person name="Ravel J."/>
            <person name="Sutton G."/>
        </authorList>
    </citation>
    <scope>NUCLEOTIDE SEQUENCE [LARGE SCALE GENOMIC DNA]</scope>
    <source>
        <strain>AH187</strain>
    </source>
</reference>
<accession>B7HY98</accession>
<name>PYRG_BACC7</name>
<sequence>MTKYIFVTGGVVSSLGKGITAASLGRLLKNRGLNVTIQKFDPYINVDPGTMSPYQHGEVFVTDDGAETDLDLGHYERFIDINLNKYSNVTTGKIYSSVLQKERRGEYLGGTVQVIPHITNEIKERVYRSGRETNADVVITEIGGTVGDIESLPFLEAIRQIKSDIGRDNVMYIHCTLIPYLKAAGEMKTKPTQHSVKELRSLGIQPNIIVVRTEMPVSQDMKDKLALFCDIDTKAVIEARDADTLYAVPLSLQEQNMDQIVCDHLKLDNPAADMTEWTALVEKVRNLSKKTKIALVGKYVELQDAYISVVEALRHAGYSFDTDVEVKWVNAEHVTAENVQELVGDTDGILVPGGFGDRGVEGKIVAIQYARENKVPFLGICLGMQLASIEFARNVLGLEGANSSEINPDTPYAIIDLLPEQKDVEDLGGTLRLGLYPCKLAEETNAYNAYNEPVVYERHRHRYEFNNQFRPDMEKAGFVFSGTSPDGRLVEIIELKDHPWFVAAQFHPELVSRPNRPQPLFHDFVRASITNKESK</sequence>
<organism>
    <name type="scientific">Bacillus cereus (strain AH187)</name>
    <dbReference type="NCBI Taxonomy" id="405534"/>
    <lineage>
        <taxon>Bacteria</taxon>
        <taxon>Bacillati</taxon>
        <taxon>Bacillota</taxon>
        <taxon>Bacilli</taxon>
        <taxon>Bacillales</taxon>
        <taxon>Bacillaceae</taxon>
        <taxon>Bacillus</taxon>
        <taxon>Bacillus cereus group</taxon>
    </lineage>
</organism>
<evidence type="ECO:0000255" key="1">
    <source>
        <dbReference type="HAMAP-Rule" id="MF_01227"/>
    </source>
</evidence>
<protein>
    <recommendedName>
        <fullName evidence="1">CTP synthase</fullName>
        <ecNumber evidence="1">6.3.4.2</ecNumber>
    </recommendedName>
    <alternativeName>
        <fullName evidence="1">Cytidine 5'-triphosphate synthase</fullName>
    </alternativeName>
    <alternativeName>
        <fullName evidence="1">Cytidine triphosphate synthetase</fullName>
        <shortName evidence="1">CTP synthetase</shortName>
        <shortName evidence="1">CTPS</shortName>
    </alternativeName>
    <alternativeName>
        <fullName evidence="1">UTP--ammonia ligase</fullName>
    </alternativeName>
</protein>
<gene>
    <name evidence="1" type="primary">pyrG</name>
    <name type="ordered locus">BCAH187_A5516</name>
</gene>
<dbReference type="EC" id="6.3.4.2" evidence="1"/>
<dbReference type="EMBL" id="CP001177">
    <property type="protein sequence ID" value="ACJ79474.1"/>
    <property type="molecule type" value="Genomic_DNA"/>
</dbReference>
<dbReference type="SMR" id="B7HY98"/>
<dbReference type="MEROPS" id="C26.964"/>
<dbReference type="KEGG" id="bcr:BCAH187_A5516"/>
<dbReference type="HOGENOM" id="CLU_011675_5_0_9"/>
<dbReference type="UniPathway" id="UPA00159">
    <property type="reaction ID" value="UER00277"/>
</dbReference>
<dbReference type="Proteomes" id="UP000002214">
    <property type="component" value="Chromosome"/>
</dbReference>
<dbReference type="GO" id="GO:0005829">
    <property type="term" value="C:cytosol"/>
    <property type="evidence" value="ECO:0007669"/>
    <property type="project" value="TreeGrafter"/>
</dbReference>
<dbReference type="GO" id="GO:0005524">
    <property type="term" value="F:ATP binding"/>
    <property type="evidence" value="ECO:0007669"/>
    <property type="project" value="UniProtKB-KW"/>
</dbReference>
<dbReference type="GO" id="GO:0003883">
    <property type="term" value="F:CTP synthase activity"/>
    <property type="evidence" value="ECO:0007669"/>
    <property type="project" value="UniProtKB-UniRule"/>
</dbReference>
<dbReference type="GO" id="GO:0004359">
    <property type="term" value="F:glutaminase activity"/>
    <property type="evidence" value="ECO:0007669"/>
    <property type="project" value="RHEA"/>
</dbReference>
<dbReference type="GO" id="GO:0042802">
    <property type="term" value="F:identical protein binding"/>
    <property type="evidence" value="ECO:0007669"/>
    <property type="project" value="TreeGrafter"/>
</dbReference>
<dbReference type="GO" id="GO:0046872">
    <property type="term" value="F:metal ion binding"/>
    <property type="evidence" value="ECO:0007669"/>
    <property type="project" value="UniProtKB-KW"/>
</dbReference>
<dbReference type="GO" id="GO:0044210">
    <property type="term" value="P:'de novo' CTP biosynthetic process"/>
    <property type="evidence" value="ECO:0007669"/>
    <property type="project" value="UniProtKB-UniRule"/>
</dbReference>
<dbReference type="GO" id="GO:0019856">
    <property type="term" value="P:pyrimidine nucleobase biosynthetic process"/>
    <property type="evidence" value="ECO:0007669"/>
    <property type="project" value="TreeGrafter"/>
</dbReference>
<dbReference type="CDD" id="cd03113">
    <property type="entry name" value="CTPS_N"/>
    <property type="match status" value="1"/>
</dbReference>
<dbReference type="CDD" id="cd01746">
    <property type="entry name" value="GATase1_CTP_Synthase"/>
    <property type="match status" value="1"/>
</dbReference>
<dbReference type="FunFam" id="3.40.50.300:FF:000009">
    <property type="entry name" value="CTP synthase"/>
    <property type="match status" value="1"/>
</dbReference>
<dbReference type="FunFam" id="3.40.50.880:FF:000002">
    <property type="entry name" value="CTP synthase"/>
    <property type="match status" value="1"/>
</dbReference>
<dbReference type="Gene3D" id="3.40.50.880">
    <property type="match status" value="1"/>
</dbReference>
<dbReference type="Gene3D" id="3.40.50.300">
    <property type="entry name" value="P-loop containing nucleotide triphosphate hydrolases"/>
    <property type="match status" value="1"/>
</dbReference>
<dbReference type="HAMAP" id="MF_01227">
    <property type="entry name" value="PyrG"/>
    <property type="match status" value="1"/>
</dbReference>
<dbReference type="InterPro" id="IPR029062">
    <property type="entry name" value="Class_I_gatase-like"/>
</dbReference>
<dbReference type="InterPro" id="IPR004468">
    <property type="entry name" value="CTP_synthase"/>
</dbReference>
<dbReference type="InterPro" id="IPR017456">
    <property type="entry name" value="CTP_synthase_N"/>
</dbReference>
<dbReference type="InterPro" id="IPR017926">
    <property type="entry name" value="GATASE"/>
</dbReference>
<dbReference type="InterPro" id="IPR033828">
    <property type="entry name" value="GATase1_CTP_Synthase"/>
</dbReference>
<dbReference type="InterPro" id="IPR027417">
    <property type="entry name" value="P-loop_NTPase"/>
</dbReference>
<dbReference type="NCBIfam" id="NF003792">
    <property type="entry name" value="PRK05380.1"/>
    <property type="match status" value="1"/>
</dbReference>
<dbReference type="NCBIfam" id="TIGR00337">
    <property type="entry name" value="PyrG"/>
    <property type="match status" value="1"/>
</dbReference>
<dbReference type="PANTHER" id="PTHR11550">
    <property type="entry name" value="CTP SYNTHASE"/>
    <property type="match status" value="1"/>
</dbReference>
<dbReference type="PANTHER" id="PTHR11550:SF0">
    <property type="entry name" value="CTP SYNTHASE-RELATED"/>
    <property type="match status" value="1"/>
</dbReference>
<dbReference type="Pfam" id="PF06418">
    <property type="entry name" value="CTP_synth_N"/>
    <property type="match status" value="1"/>
</dbReference>
<dbReference type="Pfam" id="PF00117">
    <property type="entry name" value="GATase"/>
    <property type="match status" value="1"/>
</dbReference>
<dbReference type="SUPFAM" id="SSF52317">
    <property type="entry name" value="Class I glutamine amidotransferase-like"/>
    <property type="match status" value="1"/>
</dbReference>
<dbReference type="SUPFAM" id="SSF52540">
    <property type="entry name" value="P-loop containing nucleoside triphosphate hydrolases"/>
    <property type="match status" value="1"/>
</dbReference>
<dbReference type="PROSITE" id="PS51273">
    <property type="entry name" value="GATASE_TYPE_1"/>
    <property type="match status" value="1"/>
</dbReference>